<keyword id="KW-1003">Cell membrane</keyword>
<keyword id="KW-0342">GTP-binding</keyword>
<keyword id="KW-0378">Hydrolase</keyword>
<keyword id="KW-0472">Membrane</keyword>
<keyword id="KW-0547">Nucleotide-binding</keyword>
<keyword id="KW-0648">Protein biosynthesis</keyword>
<protein>
    <recommendedName>
        <fullName evidence="1">Elongation factor 4</fullName>
        <shortName evidence="1">EF-4</shortName>
        <ecNumber evidence="1">3.6.5.n1</ecNumber>
    </recommendedName>
    <alternativeName>
        <fullName evidence="1">Ribosomal back-translocase LepA</fullName>
    </alternativeName>
</protein>
<feature type="chain" id="PRO_1000117013" description="Elongation factor 4">
    <location>
        <begin position="1"/>
        <end position="608"/>
    </location>
</feature>
<feature type="domain" description="tr-type G">
    <location>
        <begin position="11"/>
        <end position="193"/>
    </location>
</feature>
<feature type="binding site" evidence="1">
    <location>
        <begin position="23"/>
        <end position="28"/>
    </location>
    <ligand>
        <name>GTP</name>
        <dbReference type="ChEBI" id="CHEBI:37565"/>
    </ligand>
</feature>
<feature type="binding site" evidence="1">
    <location>
        <begin position="140"/>
        <end position="143"/>
    </location>
    <ligand>
        <name>GTP</name>
        <dbReference type="ChEBI" id="CHEBI:37565"/>
    </ligand>
</feature>
<organism>
    <name type="scientific">Anoxybacillus flavithermus (strain DSM 21510 / WK1)</name>
    <dbReference type="NCBI Taxonomy" id="491915"/>
    <lineage>
        <taxon>Bacteria</taxon>
        <taxon>Bacillati</taxon>
        <taxon>Bacillota</taxon>
        <taxon>Bacilli</taxon>
        <taxon>Bacillales</taxon>
        <taxon>Anoxybacillaceae</taxon>
        <taxon>Anoxybacillus</taxon>
    </lineage>
</organism>
<evidence type="ECO:0000255" key="1">
    <source>
        <dbReference type="HAMAP-Rule" id="MF_00071"/>
    </source>
</evidence>
<accession>B7GKC4</accession>
<proteinExistence type="inferred from homology"/>
<comment type="function">
    <text evidence="1">Required for accurate and efficient protein synthesis under certain stress conditions. May act as a fidelity factor of the translation reaction, by catalyzing a one-codon backward translocation of tRNAs on improperly translocated ribosomes. Back-translocation proceeds from a post-translocation (POST) complex to a pre-translocation (PRE) complex, thus giving elongation factor G a second chance to translocate the tRNAs correctly. Binds to ribosomes in a GTP-dependent manner.</text>
</comment>
<comment type="catalytic activity">
    <reaction evidence="1">
        <text>GTP + H2O = GDP + phosphate + H(+)</text>
        <dbReference type="Rhea" id="RHEA:19669"/>
        <dbReference type="ChEBI" id="CHEBI:15377"/>
        <dbReference type="ChEBI" id="CHEBI:15378"/>
        <dbReference type="ChEBI" id="CHEBI:37565"/>
        <dbReference type="ChEBI" id="CHEBI:43474"/>
        <dbReference type="ChEBI" id="CHEBI:58189"/>
        <dbReference type="EC" id="3.6.5.n1"/>
    </reaction>
</comment>
<comment type="subcellular location">
    <subcellularLocation>
        <location evidence="1">Cell membrane</location>
        <topology evidence="1">Peripheral membrane protein</topology>
        <orientation evidence="1">Cytoplasmic side</orientation>
    </subcellularLocation>
</comment>
<comment type="similarity">
    <text evidence="1">Belongs to the TRAFAC class translation factor GTPase superfamily. Classic translation factor GTPase family. LepA subfamily.</text>
</comment>
<gene>
    <name evidence="1" type="primary">lepA</name>
    <name type="ordered locus">Aflv_0831</name>
</gene>
<dbReference type="EC" id="3.6.5.n1" evidence="1"/>
<dbReference type="EMBL" id="CP000922">
    <property type="protein sequence ID" value="ACJ33209.1"/>
    <property type="molecule type" value="Genomic_DNA"/>
</dbReference>
<dbReference type="RefSeq" id="WP_012574499.1">
    <property type="nucleotide sequence ID" value="NC_011567.1"/>
</dbReference>
<dbReference type="SMR" id="B7GKC4"/>
<dbReference type="STRING" id="491915.Aflv_0831"/>
<dbReference type="GeneID" id="7037088"/>
<dbReference type="KEGG" id="afl:Aflv_0831"/>
<dbReference type="PATRIC" id="fig|491915.6.peg.851"/>
<dbReference type="eggNOG" id="COG0481">
    <property type="taxonomic scope" value="Bacteria"/>
</dbReference>
<dbReference type="HOGENOM" id="CLU_009995_3_3_9"/>
<dbReference type="Proteomes" id="UP000000742">
    <property type="component" value="Chromosome"/>
</dbReference>
<dbReference type="GO" id="GO:0005886">
    <property type="term" value="C:plasma membrane"/>
    <property type="evidence" value="ECO:0007669"/>
    <property type="project" value="UniProtKB-SubCell"/>
</dbReference>
<dbReference type="GO" id="GO:0005525">
    <property type="term" value="F:GTP binding"/>
    <property type="evidence" value="ECO:0007669"/>
    <property type="project" value="UniProtKB-UniRule"/>
</dbReference>
<dbReference type="GO" id="GO:0003924">
    <property type="term" value="F:GTPase activity"/>
    <property type="evidence" value="ECO:0007669"/>
    <property type="project" value="UniProtKB-UniRule"/>
</dbReference>
<dbReference type="GO" id="GO:0043022">
    <property type="term" value="F:ribosome binding"/>
    <property type="evidence" value="ECO:0007669"/>
    <property type="project" value="UniProtKB-UniRule"/>
</dbReference>
<dbReference type="GO" id="GO:0003746">
    <property type="term" value="F:translation elongation factor activity"/>
    <property type="evidence" value="ECO:0007669"/>
    <property type="project" value="UniProtKB-UniRule"/>
</dbReference>
<dbReference type="GO" id="GO:0045727">
    <property type="term" value="P:positive regulation of translation"/>
    <property type="evidence" value="ECO:0007669"/>
    <property type="project" value="UniProtKB-UniRule"/>
</dbReference>
<dbReference type="CDD" id="cd03699">
    <property type="entry name" value="EF4_II"/>
    <property type="match status" value="1"/>
</dbReference>
<dbReference type="CDD" id="cd16260">
    <property type="entry name" value="EF4_III"/>
    <property type="match status" value="1"/>
</dbReference>
<dbReference type="CDD" id="cd01890">
    <property type="entry name" value="LepA"/>
    <property type="match status" value="1"/>
</dbReference>
<dbReference type="CDD" id="cd03709">
    <property type="entry name" value="lepA_C"/>
    <property type="match status" value="1"/>
</dbReference>
<dbReference type="FunFam" id="3.40.50.300:FF:000078">
    <property type="entry name" value="Elongation factor 4"/>
    <property type="match status" value="1"/>
</dbReference>
<dbReference type="FunFam" id="2.40.30.10:FF:000015">
    <property type="entry name" value="Translation factor GUF1, mitochondrial"/>
    <property type="match status" value="1"/>
</dbReference>
<dbReference type="FunFam" id="3.30.70.240:FF:000007">
    <property type="entry name" value="Translation factor GUF1, mitochondrial"/>
    <property type="match status" value="1"/>
</dbReference>
<dbReference type="FunFam" id="3.30.70.2570:FF:000001">
    <property type="entry name" value="Translation factor GUF1, mitochondrial"/>
    <property type="match status" value="1"/>
</dbReference>
<dbReference type="FunFam" id="3.30.70.870:FF:000004">
    <property type="entry name" value="Translation factor GUF1, mitochondrial"/>
    <property type="match status" value="1"/>
</dbReference>
<dbReference type="Gene3D" id="3.30.70.240">
    <property type="match status" value="1"/>
</dbReference>
<dbReference type="Gene3D" id="3.30.70.2570">
    <property type="entry name" value="Elongation factor 4, C-terminal domain"/>
    <property type="match status" value="1"/>
</dbReference>
<dbReference type="Gene3D" id="3.30.70.870">
    <property type="entry name" value="Elongation Factor G (Translational Gtpase), domain 3"/>
    <property type="match status" value="1"/>
</dbReference>
<dbReference type="Gene3D" id="3.40.50.300">
    <property type="entry name" value="P-loop containing nucleotide triphosphate hydrolases"/>
    <property type="match status" value="1"/>
</dbReference>
<dbReference type="Gene3D" id="2.40.30.10">
    <property type="entry name" value="Translation factors"/>
    <property type="match status" value="1"/>
</dbReference>
<dbReference type="HAMAP" id="MF_00071">
    <property type="entry name" value="LepA"/>
    <property type="match status" value="1"/>
</dbReference>
<dbReference type="InterPro" id="IPR006297">
    <property type="entry name" value="EF-4"/>
</dbReference>
<dbReference type="InterPro" id="IPR035647">
    <property type="entry name" value="EFG_III/V"/>
</dbReference>
<dbReference type="InterPro" id="IPR000640">
    <property type="entry name" value="EFG_V-like"/>
</dbReference>
<dbReference type="InterPro" id="IPR004161">
    <property type="entry name" value="EFTu-like_2"/>
</dbReference>
<dbReference type="InterPro" id="IPR031157">
    <property type="entry name" value="G_TR_CS"/>
</dbReference>
<dbReference type="InterPro" id="IPR038363">
    <property type="entry name" value="LepA_C_sf"/>
</dbReference>
<dbReference type="InterPro" id="IPR013842">
    <property type="entry name" value="LepA_CTD"/>
</dbReference>
<dbReference type="InterPro" id="IPR035654">
    <property type="entry name" value="LepA_IV"/>
</dbReference>
<dbReference type="InterPro" id="IPR027417">
    <property type="entry name" value="P-loop_NTPase"/>
</dbReference>
<dbReference type="InterPro" id="IPR005225">
    <property type="entry name" value="Small_GTP-bd"/>
</dbReference>
<dbReference type="InterPro" id="IPR000795">
    <property type="entry name" value="T_Tr_GTP-bd_dom"/>
</dbReference>
<dbReference type="InterPro" id="IPR009000">
    <property type="entry name" value="Transl_B-barrel_sf"/>
</dbReference>
<dbReference type="NCBIfam" id="TIGR01393">
    <property type="entry name" value="lepA"/>
    <property type="match status" value="1"/>
</dbReference>
<dbReference type="NCBIfam" id="TIGR00231">
    <property type="entry name" value="small_GTP"/>
    <property type="match status" value="1"/>
</dbReference>
<dbReference type="PANTHER" id="PTHR43512:SF4">
    <property type="entry name" value="TRANSLATION FACTOR GUF1 HOMOLOG, CHLOROPLASTIC"/>
    <property type="match status" value="1"/>
</dbReference>
<dbReference type="PANTHER" id="PTHR43512">
    <property type="entry name" value="TRANSLATION FACTOR GUF1-RELATED"/>
    <property type="match status" value="1"/>
</dbReference>
<dbReference type="Pfam" id="PF00679">
    <property type="entry name" value="EFG_C"/>
    <property type="match status" value="1"/>
</dbReference>
<dbReference type="Pfam" id="PF00009">
    <property type="entry name" value="GTP_EFTU"/>
    <property type="match status" value="1"/>
</dbReference>
<dbReference type="Pfam" id="PF03144">
    <property type="entry name" value="GTP_EFTU_D2"/>
    <property type="match status" value="1"/>
</dbReference>
<dbReference type="Pfam" id="PF06421">
    <property type="entry name" value="LepA_C"/>
    <property type="match status" value="1"/>
</dbReference>
<dbReference type="PRINTS" id="PR00315">
    <property type="entry name" value="ELONGATNFCT"/>
</dbReference>
<dbReference type="SMART" id="SM00838">
    <property type="entry name" value="EFG_C"/>
    <property type="match status" value="1"/>
</dbReference>
<dbReference type="SUPFAM" id="SSF54980">
    <property type="entry name" value="EF-G C-terminal domain-like"/>
    <property type="match status" value="2"/>
</dbReference>
<dbReference type="SUPFAM" id="SSF52540">
    <property type="entry name" value="P-loop containing nucleoside triphosphate hydrolases"/>
    <property type="match status" value="1"/>
</dbReference>
<dbReference type="SUPFAM" id="SSF50447">
    <property type="entry name" value="Translation proteins"/>
    <property type="match status" value="1"/>
</dbReference>
<dbReference type="PROSITE" id="PS00301">
    <property type="entry name" value="G_TR_1"/>
    <property type="match status" value="1"/>
</dbReference>
<dbReference type="PROSITE" id="PS51722">
    <property type="entry name" value="G_TR_2"/>
    <property type="match status" value="1"/>
</dbReference>
<sequence length="608" mass="68151">MNREERLKRRDRIRNFSIIAHIDHGKSTLADRILEKTGALSEREMKEQALDSMELERERGITIKLNAVQLHYKAKDGEDYILHLIDTPGHVDFTYEVSRSLAACEGAILVVDAAQGIEAQTLANVYLAIDNNLEILPVINKIDLPSADPERVRQEIEDVIGLDASEAVLASAKVGIGIDEILEQIVQKIPAPSGDPDAPLKALIFDSLYDPYRGVVAYIRVVEGTVKAGQKIKMMATGKEFEVVEVGVFTPKAKVVDELTVGDVGYLTASIKNVSDTRVGDTITHADNPANEPLPGYRRLNPMVFCGLYPIDTARYNDLREALEKLQLNDAALQFEPETSQALGFGFRCGFLGLLHMEIIQERLEREFNIDIIATAPSVVYKVYLTDGTELAVDNPSNMPDPQKIERVEEPYVRATIMVPNDYVGPVMELCQKKRGIFGDMQYLDERRVTLTYELPLAEIVYDFFDILKSSTKGYASFDYELIGYKPSKLVKMDILLNGEKVDALSFIVHRDSAYDRGKVIVEKLKDLIPRQQFEVPVQAAIGNKIIARSTIKALRKNVLAKCYGGDISRKRKLLEKQKEGKKRMKQVGSVEVPQEAFMAVLKMDDQK</sequence>
<reference key="1">
    <citation type="journal article" date="2008" name="Genome Biol.">
        <title>Encapsulated in silica: genome, proteome and physiology of the thermophilic bacterium Anoxybacillus flavithermus WK1.</title>
        <authorList>
            <person name="Saw J.H."/>
            <person name="Mountain B.W."/>
            <person name="Feng L."/>
            <person name="Omelchenko M.V."/>
            <person name="Hou S."/>
            <person name="Saito J.A."/>
            <person name="Stott M.B."/>
            <person name="Li D."/>
            <person name="Zhao G."/>
            <person name="Wu J."/>
            <person name="Galperin M.Y."/>
            <person name="Koonin E.V."/>
            <person name="Makarova K.S."/>
            <person name="Wolf Y.I."/>
            <person name="Rigden D.J."/>
            <person name="Dunfield P.F."/>
            <person name="Wang L."/>
            <person name="Alam M."/>
        </authorList>
    </citation>
    <scope>NUCLEOTIDE SEQUENCE [LARGE SCALE GENOMIC DNA]</scope>
    <source>
        <strain>DSM 21510 / WK1</strain>
    </source>
</reference>
<name>LEPA_ANOFW</name>